<geneLocation type="chloroplast"/>
<accession>A8SE55</accession>
<gene>
    <name evidence="1" type="primary">psbI</name>
</gene>
<evidence type="ECO:0000255" key="1">
    <source>
        <dbReference type="HAMAP-Rule" id="MF_01316"/>
    </source>
</evidence>
<organism>
    <name type="scientific">Ceratophyllum demersum</name>
    <name type="common">Rigid hornwort</name>
    <name type="synonym">Coontail</name>
    <dbReference type="NCBI Taxonomy" id="4428"/>
    <lineage>
        <taxon>Eukaryota</taxon>
        <taxon>Viridiplantae</taxon>
        <taxon>Streptophyta</taxon>
        <taxon>Embryophyta</taxon>
        <taxon>Tracheophyta</taxon>
        <taxon>Spermatophyta</taxon>
        <taxon>Magnoliopsida</taxon>
        <taxon>Ceratophyllales</taxon>
        <taxon>Ceratophyllaceae</taxon>
        <taxon>Ceratophyllum</taxon>
    </lineage>
</organism>
<protein>
    <recommendedName>
        <fullName evidence="1">Photosystem II reaction center protein I</fullName>
        <shortName evidence="1">PSII-I</shortName>
    </recommendedName>
    <alternativeName>
        <fullName evidence="1">PSII 4.8 kDa protein</fullName>
    </alternativeName>
</protein>
<name>PSBI_CERDE</name>
<proteinExistence type="inferred from homology"/>
<dbReference type="EMBL" id="EF614270">
    <property type="protein sequence ID" value="ABQ81434.1"/>
    <property type="molecule type" value="Genomic_DNA"/>
</dbReference>
<dbReference type="RefSeq" id="YP_001542431.1">
    <property type="nucleotide sequence ID" value="NC_009962.1"/>
</dbReference>
<dbReference type="SMR" id="A8SE55"/>
<dbReference type="GeneID" id="5729445"/>
<dbReference type="GO" id="GO:0009535">
    <property type="term" value="C:chloroplast thylakoid membrane"/>
    <property type="evidence" value="ECO:0007669"/>
    <property type="project" value="UniProtKB-SubCell"/>
</dbReference>
<dbReference type="GO" id="GO:0009539">
    <property type="term" value="C:photosystem II reaction center"/>
    <property type="evidence" value="ECO:0007669"/>
    <property type="project" value="InterPro"/>
</dbReference>
<dbReference type="GO" id="GO:0015979">
    <property type="term" value="P:photosynthesis"/>
    <property type="evidence" value="ECO:0007669"/>
    <property type="project" value="UniProtKB-UniRule"/>
</dbReference>
<dbReference type="HAMAP" id="MF_01316">
    <property type="entry name" value="PSII_PsbI"/>
    <property type="match status" value="1"/>
</dbReference>
<dbReference type="InterPro" id="IPR003686">
    <property type="entry name" value="PSII_PsbI"/>
</dbReference>
<dbReference type="InterPro" id="IPR037271">
    <property type="entry name" value="PSII_PsbI_sf"/>
</dbReference>
<dbReference type="NCBIfam" id="NF002735">
    <property type="entry name" value="PRK02655.1"/>
    <property type="match status" value="1"/>
</dbReference>
<dbReference type="PANTHER" id="PTHR35772">
    <property type="entry name" value="PHOTOSYSTEM II REACTION CENTER PROTEIN I"/>
    <property type="match status" value="1"/>
</dbReference>
<dbReference type="PANTHER" id="PTHR35772:SF1">
    <property type="entry name" value="PHOTOSYSTEM II REACTION CENTER PROTEIN I"/>
    <property type="match status" value="1"/>
</dbReference>
<dbReference type="Pfam" id="PF02532">
    <property type="entry name" value="PsbI"/>
    <property type="match status" value="1"/>
</dbReference>
<dbReference type="SUPFAM" id="SSF161041">
    <property type="entry name" value="Photosystem II reaction center protein I, PsbI"/>
    <property type="match status" value="1"/>
</dbReference>
<feature type="chain" id="PRO_0000353221" description="Photosystem II reaction center protein I">
    <location>
        <begin position="1"/>
        <end position="36"/>
    </location>
</feature>
<feature type="transmembrane region" description="Helical" evidence="1">
    <location>
        <begin position="4"/>
        <end position="24"/>
    </location>
</feature>
<sequence length="36" mass="4168">MLTLKLFVYTVVIFFVSLFIFGFLSNDPGRNPGREE</sequence>
<keyword id="KW-0150">Chloroplast</keyword>
<keyword id="KW-0472">Membrane</keyword>
<keyword id="KW-0602">Photosynthesis</keyword>
<keyword id="KW-0604">Photosystem II</keyword>
<keyword id="KW-0934">Plastid</keyword>
<keyword id="KW-0674">Reaction center</keyword>
<keyword id="KW-0793">Thylakoid</keyword>
<keyword id="KW-0812">Transmembrane</keyword>
<keyword id="KW-1133">Transmembrane helix</keyword>
<reference key="1">
    <citation type="journal article" date="2007" name="Proc. Natl. Acad. Sci. U.S.A.">
        <title>Using plastid genome-scale data to resolve enigmatic relationships among basal angiosperms.</title>
        <authorList>
            <person name="Moore M.J."/>
            <person name="Bell C.D."/>
            <person name="Soltis P.S."/>
            <person name="Soltis D.E."/>
        </authorList>
    </citation>
    <scope>NUCLEOTIDE SEQUENCE [LARGE SCALE GENOMIC DNA]</scope>
</reference>
<comment type="function">
    <text evidence="1">One of the components of the core complex of photosystem II (PSII), required for its stability and/or assembly. PSII is a light-driven water:plastoquinone oxidoreductase that uses light energy to abstract electrons from H(2)O, generating O(2) and a proton gradient subsequently used for ATP formation. It consists of a core antenna complex that captures photons, and an electron transfer chain that converts photonic excitation into a charge separation.</text>
</comment>
<comment type="subunit">
    <text evidence="1">PSII is composed of 1 copy each of membrane proteins PsbA, PsbB, PsbC, PsbD, PsbE, PsbF, PsbH, PsbI, PsbJ, PsbK, PsbL, PsbM, PsbT, PsbX, PsbY, PsbZ, Psb30/Ycf12, at least 3 peripheral proteins of the oxygen-evolving complex and a large number of cofactors. It forms dimeric complexes.</text>
</comment>
<comment type="subcellular location">
    <subcellularLocation>
        <location evidence="1">Plastid</location>
        <location evidence="1">Chloroplast thylakoid membrane</location>
        <topology evidence="1">Single-pass membrane protein</topology>
    </subcellularLocation>
</comment>
<comment type="similarity">
    <text evidence="1">Belongs to the PsbI family.</text>
</comment>